<organism>
    <name type="scientific">Rhodopseudomonas palustris (strain TIE-1)</name>
    <dbReference type="NCBI Taxonomy" id="395960"/>
    <lineage>
        <taxon>Bacteria</taxon>
        <taxon>Pseudomonadati</taxon>
        <taxon>Pseudomonadota</taxon>
        <taxon>Alphaproteobacteria</taxon>
        <taxon>Hyphomicrobiales</taxon>
        <taxon>Nitrobacteraceae</taxon>
        <taxon>Rhodopseudomonas</taxon>
    </lineage>
</organism>
<name>ENGB_RHOPT</name>
<comment type="function">
    <text evidence="1">Necessary for normal cell division and for the maintenance of normal septation.</text>
</comment>
<comment type="cofactor">
    <cofactor evidence="1">
        <name>Mg(2+)</name>
        <dbReference type="ChEBI" id="CHEBI:18420"/>
    </cofactor>
</comment>
<comment type="similarity">
    <text evidence="1">Belongs to the TRAFAC class TrmE-Era-EngA-EngB-Septin-like GTPase superfamily. EngB GTPase family.</text>
</comment>
<protein>
    <recommendedName>
        <fullName evidence="1">Probable GTP-binding protein EngB</fullName>
    </recommendedName>
</protein>
<keyword id="KW-0131">Cell cycle</keyword>
<keyword id="KW-0132">Cell division</keyword>
<keyword id="KW-0342">GTP-binding</keyword>
<keyword id="KW-0460">Magnesium</keyword>
<keyword id="KW-0479">Metal-binding</keyword>
<keyword id="KW-0547">Nucleotide-binding</keyword>
<keyword id="KW-0717">Septation</keyword>
<evidence type="ECO:0000255" key="1">
    <source>
        <dbReference type="HAMAP-Rule" id="MF_00321"/>
    </source>
</evidence>
<feature type="chain" id="PRO_1000115999" description="Probable GTP-binding protein EngB">
    <location>
        <begin position="1"/>
        <end position="216"/>
    </location>
</feature>
<feature type="domain" description="EngB-type G" evidence="1">
    <location>
        <begin position="37"/>
        <end position="214"/>
    </location>
</feature>
<feature type="binding site" evidence="1">
    <location>
        <begin position="45"/>
        <end position="52"/>
    </location>
    <ligand>
        <name>GTP</name>
        <dbReference type="ChEBI" id="CHEBI:37565"/>
    </ligand>
</feature>
<feature type="binding site" evidence="1">
    <location>
        <position position="52"/>
    </location>
    <ligand>
        <name>Mg(2+)</name>
        <dbReference type="ChEBI" id="CHEBI:18420"/>
    </ligand>
</feature>
<feature type="binding site" evidence="1">
    <location>
        <begin position="72"/>
        <end position="76"/>
    </location>
    <ligand>
        <name>GTP</name>
        <dbReference type="ChEBI" id="CHEBI:37565"/>
    </ligand>
</feature>
<feature type="binding site" evidence="1">
    <location>
        <position position="74"/>
    </location>
    <ligand>
        <name>Mg(2+)</name>
        <dbReference type="ChEBI" id="CHEBI:18420"/>
    </ligand>
</feature>
<feature type="binding site" evidence="1">
    <location>
        <begin position="92"/>
        <end position="95"/>
    </location>
    <ligand>
        <name>GTP</name>
        <dbReference type="ChEBI" id="CHEBI:37565"/>
    </ligand>
</feature>
<feature type="binding site" evidence="1">
    <location>
        <begin position="159"/>
        <end position="162"/>
    </location>
    <ligand>
        <name>GTP</name>
        <dbReference type="ChEBI" id="CHEBI:37565"/>
    </ligand>
</feature>
<feature type="binding site" evidence="1">
    <location>
        <begin position="193"/>
        <end position="195"/>
    </location>
    <ligand>
        <name>GTP</name>
        <dbReference type="ChEBI" id="CHEBI:37565"/>
    </ligand>
</feature>
<proteinExistence type="inferred from homology"/>
<gene>
    <name evidence="1" type="primary">engB</name>
    <name type="ordered locus">Rpal_0635</name>
</gene>
<accession>B3QCI1</accession>
<sequence length="216" mass="23404">MTDTIDPDLIERGRKMFAGDWHFIWASPSIETLPPMGSVEIAFAGRSNVGKSSLINALTGRNALARTSHTPGRTQELIFFEGPPNAGLRLVDMPGYGYAAASKAKVASWTSLIHHFLQGRATLARVYVLIDGRHGLKDVDLDILKTLDKAAVSYQIVLTKADQVKAAELAERVTATVAALAKHPAAFPEVLTTSSRTGAGMPELRAAMIRLLDERR</sequence>
<dbReference type="EMBL" id="CP001096">
    <property type="protein sequence ID" value="ACE99194.1"/>
    <property type="molecule type" value="Genomic_DNA"/>
</dbReference>
<dbReference type="RefSeq" id="WP_012494290.1">
    <property type="nucleotide sequence ID" value="NC_011004.1"/>
</dbReference>
<dbReference type="SMR" id="B3QCI1"/>
<dbReference type="KEGG" id="rpt:Rpal_0635"/>
<dbReference type="HOGENOM" id="CLU_033732_2_0_5"/>
<dbReference type="OrthoDB" id="9804921at2"/>
<dbReference type="Proteomes" id="UP000001725">
    <property type="component" value="Chromosome"/>
</dbReference>
<dbReference type="GO" id="GO:0005829">
    <property type="term" value="C:cytosol"/>
    <property type="evidence" value="ECO:0007669"/>
    <property type="project" value="TreeGrafter"/>
</dbReference>
<dbReference type="GO" id="GO:0005525">
    <property type="term" value="F:GTP binding"/>
    <property type="evidence" value="ECO:0007669"/>
    <property type="project" value="UniProtKB-UniRule"/>
</dbReference>
<dbReference type="GO" id="GO:0046872">
    <property type="term" value="F:metal ion binding"/>
    <property type="evidence" value="ECO:0007669"/>
    <property type="project" value="UniProtKB-KW"/>
</dbReference>
<dbReference type="GO" id="GO:0000917">
    <property type="term" value="P:division septum assembly"/>
    <property type="evidence" value="ECO:0007669"/>
    <property type="project" value="UniProtKB-KW"/>
</dbReference>
<dbReference type="CDD" id="cd01876">
    <property type="entry name" value="YihA_EngB"/>
    <property type="match status" value="1"/>
</dbReference>
<dbReference type="Gene3D" id="3.40.50.300">
    <property type="entry name" value="P-loop containing nucleotide triphosphate hydrolases"/>
    <property type="match status" value="1"/>
</dbReference>
<dbReference type="HAMAP" id="MF_00321">
    <property type="entry name" value="GTPase_EngB"/>
    <property type="match status" value="1"/>
</dbReference>
<dbReference type="InterPro" id="IPR030393">
    <property type="entry name" value="G_ENGB_dom"/>
</dbReference>
<dbReference type="InterPro" id="IPR006073">
    <property type="entry name" value="GTP-bd"/>
</dbReference>
<dbReference type="InterPro" id="IPR019987">
    <property type="entry name" value="GTP-bd_ribosome_bio_YsxC"/>
</dbReference>
<dbReference type="InterPro" id="IPR027417">
    <property type="entry name" value="P-loop_NTPase"/>
</dbReference>
<dbReference type="NCBIfam" id="TIGR03598">
    <property type="entry name" value="GTPase_YsxC"/>
    <property type="match status" value="1"/>
</dbReference>
<dbReference type="PANTHER" id="PTHR11649:SF13">
    <property type="entry name" value="ENGB-TYPE G DOMAIN-CONTAINING PROTEIN"/>
    <property type="match status" value="1"/>
</dbReference>
<dbReference type="PANTHER" id="PTHR11649">
    <property type="entry name" value="MSS1/TRME-RELATED GTP-BINDING PROTEIN"/>
    <property type="match status" value="1"/>
</dbReference>
<dbReference type="Pfam" id="PF01926">
    <property type="entry name" value="MMR_HSR1"/>
    <property type="match status" value="1"/>
</dbReference>
<dbReference type="SUPFAM" id="SSF52540">
    <property type="entry name" value="P-loop containing nucleoside triphosphate hydrolases"/>
    <property type="match status" value="1"/>
</dbReference>
<dbReference type="PROSITE" id="PS51706">
    <property type="entry name" value="G_ENGB"/>
    <property type="match status" value="1"/>
</dbReference>
<reference key="1">
    <citation type="submission" date="2008-05" db="EMBL/GenBank/DDBJ databases">
        <title>Complete sequence of Rhodopseudomonas palustris TIE-1.</title>
        <authorList>
            <consortium name="US DOE Joint Genome Institute"/>
            <person name="Lucas S."/>
            <person name="Copeland A."/>
            <person name="Lapidus A."/>
            <person name="Glavina del Rio T."/>
            <person name="Dalin E."/>
            <person name="Tice H."/>
            <person name="Pitluck S."/>
            <person name="Chain P."/>
            <person name="Malfatti S."/>
            <person name="Shin M."/>
            <person name="Vergez L."/>
            <person name="Lang D."/>
            <person name="Schmutz J."/>
            <person name="Larimer F."/>
            <person name="Land M."/>
            <person name="Hauser L."/>
            <person name="Kyrpides N."/>
            <person name="Mikhailova N."/>
            <person name="Emerson D."/>
            <person name="Newman D.K."/>
            <person name="Roden E."/>
            <person name="Richardson P."/>
        </authorList>
    </citation>
    <scope>NUCLEOTIDE SEQUENCE [LARGE SCALE GENOMIC DNA]</scope>
    <source>
        <strain>TIE-1</strain>
    </source>
</reference>